<keyword id="KW-0131">Cell cycle</keyword>
<keyword id="KW-0132">Cell division</keyword>
<keyword id="KW-0133">Cell shape</keyword>
<keyword id="KW-0961">Cell wall biogenesis/degradation</keyword>
<keyword id="KW-0963">Cytoplasm</keyword>
<keyword id="KW-0274">FAD</keyword>
<keyword id="KW-0285">Flavoprotein</keyword>
<keyword id="KW-0521">NADP</keyword>
<keyword id="KW-0560">Oxidoreductase</keyword>
<keyword id="KW-0573">Peptidoglycan synthesis</keyword>
<comment type="function">
    <text evidence="1">Cell wall formation.</text>
</comment>
<comment type="catalytic activity">
    <reaction evidence="1">
        <text>UDP-N-acetyl-alpha-D-muramate + NADP(+) = UDP-N-acetyl-3-O-(1-carboxyvinyl)-alpha-D-glucosamine + NADPH + H(+)</text>
        <dbReference type="Rhea" id="RHEA:12248"/>
        <dbReference type="ChEBI" id="CHEBI:15378"/>
        <dbReference type="ChEBI" id="CHEBI:57783"/>
        <dbReference type="ChEBI" id="CHEBI:58349"/>
        <dbReference type="ChEBI" id="CHEBI:68483"/>
        <dbReference type="ChEBI" id="CHEBI:70757"/>
        <dbReference type="EC" id="1.3.1.98"/>
    </reaction>
</comment>
<comment type="cofactor">
    <cofactor evidence="1">
        <name>FAD</name>
        <dbReference type="ChEBI" id="CHEBI:57692"/>
    </cofactor>
</comment>
<comment type="pathway">
    <text evidence="1">Cell wall biogenesis; peptidoglycan biosynthesis.</text>
</comment>
<comment type="subcellular location">
    <subcellularLocation>
        <location evidence="1">Cytoplasm</location>
    </subcellularLocation>
</comment>
<comment type="similarity">
    <text evidence="1">Belongs to the MurB family.</text>
</comment>
<name>MURB_STAAM</name>
<sequence length="307" mass="33783">MINKDIYQALQQLIPNEKIKVDEPLKRYTYTKTGGNADFYITPTKNEEVQAVVKYAYQNEIPVTYLGNGSNIIIREGGIRGIVISLLSLDHIDVSDDAIIAGSGAAIIDVSRVARDYALTGLEFACGIPGSIGGAVYMNAGAYGGEVKDCIDYALCVNEQGSLIKLTTKELELDYRNSIIQKEHLVVLEAAFTLAPGKMTEIQAKMDDLTERRESKQPLEYPSCGSVFQRPPGHFAGKLIQDSNLQGHRIGGVEVSTKHAGFMVNVDNGTATDYENLIHYVQKTVKEKFGIELNREVRIIGEHPKES</sequence>
<proteinExistence type="inferred from homology"/>
<reference key="1">
    <citation type="journal article" date="2001" name="Lancet">
        <title>Whole genome sequencing of meticillin-resistant Staphylococcus aureus.</title>
        <authorList>
            <person name="Kuroda M."/>
            <person name="Ohta T."/>
            <person name="Uchiyama I."/>
            <person name="Baba T."/>
            <person name="Yuzawa H."/>
            <person name="Kobayashi I."/>
            <person name="Cui L."/>
            <person name="Oguchi A."/>
            <person name="Aoki K."/>
            <person name="Nagai Y."/>
            <person name="Lian J.-Q."/>
            <person name="Ito T."/>
            <person name="Kanamori M."/>
            <person name="Matsumaru H."/>
            <person name="Maruyama A."/>
            <person name="Murakami H."/>
            <person name="Hosoyama A."/>
            <person name="Mizutani-Ui Y."/>
            <person name="Takahashi N.K."/>
            <person name="Sawano T."/>
            <person name="Inoue R."/>
            <person name="Kaito C."/>
            <person name="Sekimizu K."/>
            <person name="Hirakawa H."/>
            <person name="Kuhara S."/>
            <person name="Goto S."/>
            <person name="Yabuzaki J."/>
            <person name="Kanehisa M."/>
            <person name="Yamashita A."/>
            <person name="Oshima K."/>
            <person name="Furuya K."/>
            <person name="Yoshino C."/>
            <person name="Shiba T."/>
            <person name="Hattori M."/>
            <person name="Ogasawara N."/>
            <person name="Hayashi H."/>
            <person name="Hiramatsu K."/>
        </authorList>
    </citation>
    <scope>NUCLEOTIDE SEQUENCE [LARGE SCALE GENOMIC DNA]</scope>
    <source>
        <strain>Mu50 / ATCC 700699</strain>
    </source>
</reference>
<evidence type="ECO:0000255" key="1">
    <source>
        <dbReference type="HAMAP-Rule" id="MF_00037"/>
    </source>
</evidence>
<protein>
    <recommendedName>
        <fullName evidence="1">UDP-N-acetylenolpyruvoylglucosamine reductase</fullName>
        <ecNumber evidence="1">1.3.1.98</ecNumber>
    </recommendedName>
    <alternativeName>
        <fullName evidence="1">UDP-N-acetylmuramate dehydrogenase</fullName>
    </alternativeName>
</protein>
<organism>
    <name type="scientific">Staphylococcus aureus (strain Mu50 / ATCC 700699)</name>
    <dbReference type="NCBI Taxonomy" id="158878"/>
    <lineage>
        <taxon>Bacteria</taxon>
        <taxon>Bacillati</taxon>
        <taxon>Bacillota</taxon>
        <taxon>Bacilli</taxon>
        <taxon>Bacillales</taxon>
        <taxon>Staphylococcaceae</taxon>
        <taxon>Staphylococcus</taxon>
    </lineage>
</organism>
<accession>P65462</accession>
<accession>Q99VN6</accession>
<feature type="chain" id="PRO_0000179257" description="UDP-N-acetylenolpyruvoylglucosamine reductase">
    <location>
        <begin position="1"/>
        <end position="307"/>
    </location>
</feature>
<feature type="domain" description="FAD-binding PCMH-type" evidence="1">
    <location>
        <begin position="33"/>
        <end position="197"/>
    </location>
</feature>
<feature type="active site" evidence="1">
    <location>
        <position position="176"/>
    </location>
</feature>
<feature type="active site" description="Proton donor" evidence="1">
    <location>
        <position position="226"/>
    </location>
</feature>
<feature type="active site" evidence="1">
    <location>
        <position position="296"/>
    </location>
</feature>
<dbReference type="EC" id="1.3.1.98" evidence="1"/>
<dbReference type="EMBL" id="BA000017">
    <property type="protein sequence ID" value="BAB56900.1"/>
    <property type="molecule type" value="Genomic_DNA"/>
</dbReference>
<dbReference type="RefSeq" id="WP_000608433.1">
    <property type="nucleotide sequence ID" value="NC_002758.2"/>
</dbReference>
<dbReference type="SMR" id="P65462"/>
<dbReference type="KEGG" id="sav:SAV0738"/>
<dbReference type="HOGENOM" id="CLU_035304_1_1_9"/>
<dbReference type="PhylomeDB" id="P65462"/>
<dbReference type="UniPathway" id="UPA00219"/>
<dbReference type="Proteomes" id="UP000002481">
    <property type="component" value="Chromosome"/>
</dbReference>
<dbReference type="GO" id="GO:0005829">
    <property type="term" value="C:cytosol"/>
    <property type="evidence" value="ECO:0007669"/>
    <property type="project" value="TreeGrafter"/>
</dbReference>
<dbReference type="GO" id="GO:0071949">
    <property type="term" value="F:FAD binding"/>
    <property type="evidence" value="ECO:0007669"/>
    <property type="project" value="InterPro"/>
</dbReference>
<dbReference type="GO" id="GO:0008762">
    <property type="term" value="F:UDP-N-acetylmuramate dehydrogenase activity"/>
    <property type="evidence" value="ECO:0007669"/>
    <property type="project" value="UniProtKB-UniRule"/>
</dbReference>
<dbReference type="GO" id="GO:0051301">
    <property type="term" value="P:cell division"/>
    <property type="evidence" value="ECO:0007669"/>
    <property type="project" value="UniProtKB-KW"/>
</dbReference>
<dbReference type="GO" id="GO:0071555">
    <property type="term" value="P:cell wall organization"/>
    <property type="evidence" value="ECO:0007669"/>
    <property type="project" value="UniProtKB-KW"/>
</dbReference>
<dbReference type="GO" id="GO:0009252">
    <property type="term" value="P:peptidoglycan biosynthetic process"/>
    <property type="evidence" value="ECO:0007669"/>
    <property type="project" value="UniProtKB-UniRule"/>
</dbReference>
<dbReference type="GO" id="GO:0008360">
    <property type="term" value="P:regulation of cell shape"/>
    <property type="evidence" value="ECO:0007669"/>
    <property type="project" value="UniProtKB-KW"/>
</dbReference>
<dbReference type="FunFam" id="3.90.78.10:FF:000001">
    <property type="entry name" value="UDP-N-acetylenolpyruvoylglucosamine reductase"/>
    <property type="match status" value="1"/>
</dbReference>
<dbReference type="Gene3D" id="3.30.465.10">
    <property type="match status" value="1"/>
</dbReference>
<dbReference type="Gene3D" id="3.90.78.10">
    <property type="entry name" value="UDP-N-acetylenolpyruvoylglucosamine reductase, C-terminal domain"/>
    <property type="match status" value="1"/>
</dbReference>
<dbReference type="Gene3D" id="3.30.43.10">
    <property type="entry name" value="Uridine Diphospho-n-acetylenolpyruvylglucosamine Reductase, domain 2"/>
    <property type="match status" value="1"/>
</dbReference>
<dbReference type="HAMAP" id="MF_00037">
    <property type="entry name" value="MurB"/>
    <property type="match status" value="1"/>
</dbReference>
<dbReference type="InterPro" id="IPR016166">
    <property type="entry name" value="FAD-bd_PCMH"/>
</dbReference>
<dbReference type="InterPro" id="IPR036318">
    <property type="entry name" value="FAD-bd_PCMH-like_sf"/>
</dbReference>
<dbReference type="InterPro" id="IPR016167">
    <property type="entry name" value="FAD-bd_PCMH_sub1"/>
</dbReference>
<dbReference type="InterPro" id="IPR016169">
    <property type="entry name" value="FAD-bd_PCMH_sub2"/>
</dbReference>
<dbReference type="InterPro" id="IPR003170">
    <property type="entry name" value="MurB"/>
</dbReference>
<dbReference type="InterPro" id="IPR011601">
    <property type="entry name" value="MurB_C"/>
</dbReference>
<dbReference type="InterPro" id="IPR036635">
    <property type="entry name" value="MurB_C_sf"/>
</dbReference>
<dbReference type="InterPro" id="IPR006094">
    <property type="entry name" value="Oxid_FAD_bind_N"/>
</dbReference>
<dbReference type="NCBIfam" id="TIGR00179">
    <property type="entry name" value="murB"/>
    <property type="match status" value="1"/>
</dbReference>
<dbReference type="NCBIfam" id="NF010480">
    <property type="entry name" value="PRK13905.1"/>
    <property type="match status" value="1"/>
</dbReference>
<dbReference type="PANTHER" id="PTHR21071">
    <property type="entry name" value="UDP-N-ACETYLENOLPYRUVOYLGLUCOSAMINE REDUCTASE"/>
    <property type="match status" value="1"/>
</dbReference>
<dbReference type="PANTHER" id="PTHR21071:SF4">
    <property type="entry name" value="UDP-N-ACETYLENOLPYRUVOYLGLUCOSAMINE REDUCTASE"/>
    <property type="match status" value="1"/>
</dbReference>
<dbReference type="Pfam" id="PF01565">
    <property type="entry name" value="FAD_binding_4"/>
    <property type="match status" value="1"/>
</dbReference>
<dbReference type="Pfam" id="PF02873">
    <property type="entry name" value="MurB_C"/>
    <property type="match status" value="1"/>
</dbReference>
<dbReference type="SUPFAM" id="SSF56176">
    <property type="entry name" value="FAD-binding/transporter-associated domain-like"/>
    <property type="match status" value="1"/>
</dbReference>
<dbReference type="SUPFAM" id="SSF56194">
    <property type="entry name" value="Uridine diphospho-N-Acetylenolpyruvylglucosamine reductase, MurB, C-terminal domain"/>
    <property type="match status" value="1"/>
</dbReference>
<dbReference type="PROSITE" id="PS51387">
    <property type="entry name" value="FAD_PCMH"/>
    <property type="match status" value="1"/>
</dbReference>
<gene>
    <name evidence="1" type="primary">murB</name>
    <name type="ordered locus">SAV0738</name>
</gene>